<sequence length="279" mass="29825">MTGPLATGRAGTGDDVVGVEVTIDGMLVIADRLHLVDFPVTLGIRPNIPQEDLREIVWDQVARDLTAQGVLDHNGQPHPAVAAMVDTLSRADRTLEGRWWRRDVGGVMVRFVVCRKGERHVIAVRDGDMLVLQLVAPRVGLAGMVTAVLGTAEPANVEPLTGIASELGECTNAAQLTRYGLTPTTARLYTEIVTNPKSWVEIVASERHPGGTTTHTKAAAGVLDSAHGRLVSLPRQVGGELYGSFLPGTEQNLQRALDSLLELLPSGSWLDRADATARG</sequence>
<gene>
    <name evidence="5" type="primary">espG1</name>
    <name evidence="7" type="ordered locus">MMAR_5441</name>
</gene>
<dbReference type="EMBL" id="CP000854">
    <property type="protein sequence ID" value="ACC43848.1"/>
    <property type="molecule type" value="Genomic_DNA"/>
</dbReference>
<dbReference type="RefSeq" id="WP_012396941.1">
    <property type="nucleotide sequence ID" value="NC_010612.1"/>
</dbReference>
<dbReference type="SASBDB" id="B2HMS9"/>
<dbReference type="SMR" id="B2HMS9"/>
<dbReference type="STRING" id="216594.MMAR_5441"/>
<dbReference type="KEGG" id="mmi:MMAR_5441"/>
<dbReference type="eggNOG" id="ENOG502ZNK2">
    <property type="taxonomic scope" value="Bacteria"/>
</dbReference>
<dbReference type="HOGENOM" id="CLU_073321_1_0_11"/>
<dbReference type="OrthoDB" id="4685535at2"/>
<dbReference type="PHI-base" id="PHI:8473"/>
<dbReference type="Proteomes" id="UP000001190">
    <property type="component" value="Chromosome"/>
</dbReference>
<dbReference type="GO" id="GO:0005737">
    <property type="term" value="C:cytoplasm"/>
    <property type="evidence" value="ECO:0007669"/>
    <property type="project" value="UniProtKB-SubCell"/>
</dbReference>
<dbReference type="InterPro" id="IPR025734">
    <property type="entry name" value="EspG"/>
</dbReference>
<dbReference type="Pfam" id="PF14011">
    <property type="entry name" value="ESX-1_EspG"/>
    <property type="match status" value="1"/>
</dbReference>
<keyword id="KW-0143">Chaperone</keyword>
<keyword id="KW-0963">Cytoplasm</keyword>
<keyword id="KW-1185">Reference proteome</keyword>
<name>ESPG1_MYCMM</name>
<evidence type="ECO:0000250" key="1">
    <source>
        <dbReference type="UniProtKB" id="B2HSU5"/>
    </source>
</evidence>
<evidence type="ECO:0000250" key="2">
    <source>
        <dbReference type="UniProtKB" id="O53943"/>
    </source>
</evidence>
<evidence type="ECO:0000269" key="3">
    <source>
    </source>
</evidence>
<evidence type="ECO:0000269" key="4">
    <source>
    </source>
</evidence>
<evidence type="ECO:0000303" key="5">
    <source>
    </source>
</evidence>
<evidence type="ECO:0000305" key="6"/>
<evidence type="ECO:0000312" key="7">
    <source>
        <dbReference type="EMBL" id="ACC43848.1"/>
    </source>
</evidence>
<reference key="1">
    <citation type="journal article" date="2008" name="Genome Res.">
        <title>Insights from the complete genome sequence of Mycobacterium marinum on the evolution of Mycobacterium tuberculosis.</title>
        <authorList>
            <person name="Stinear T.P."/>
            <person name="Seemann T."/>
            <person name="Harrison P.F."/>
            <person name="Jenkin G.A."/>
            <person name="Davies J.K."/>
            <person name="Johnson P.D."/>
            <person name="Abdellah Z."/>
            <person name="Arrowsmith C."/>
            <person name="Chillingworth T."/>
            <person name="Churcher C."/>
            <person name="Clarke K."/>
            <person name="Cronin A."/>
            <person name="Davis P."/>
            <person name="Goodhead I."/>
            <person name="Holroyd N."/>
            <person name="Jagels K."/>
            <person name="Lord A."/>
            <person name="Moule S."/>
            <person name="Mungall K."/>
            <person name="Norbertczak H."/>
            <person name="Quail M.A."/>
            <person name="Rabbinowitsch E."/>
            <person name="Walker D."/>
            <person name="White B."/>
            <person name="Whitehead S."/>
            <person name="Small P.L."/>
            <person name="Brosch R."/>
            <person name="Ramakrishnan L."/>
            <person name="Fischbach M.A."/>
            <person name="Parkhill J."/>
            <person name="Cole S.T."/>
        </authorList>
    </citation>
    <scope>NUCLEOTIDE SEQUENCE [LARGE SCALE GENOMIC DNA]</scope>
    <source>
        <strain>ATCC BAA-535 / M</strain>
    </source>
</reference>
<reference key="2">
    <citation type="journal article" date="2012" name="J. Biol. Chem.">
        <title>Specific chaperones for the type VII protein secretion pathway.</title>
        <authorList>
            <person name="Daleke M.H."/>
            <person name="van der Woude A.D."/>
            <person name="Parret A.H."/>
            <person name="Ummels R."/>
            <person name="de Groot A.M."/>
            <person name="Watson D."/>
            <person name="Piersma S.R."/>
            <person name="Jimenez C.R."/>
            <person name="Luirink J."/>
            <person name="Bitter W."/>
            <person name="Houben E.N."/>
        </authorList>
    </citation>
    <scope>FUNCTION</scope>
    <scope>SUBUNIT</scope>
    <source>
        <strain>E11</strain>
    </source>
</reference>
<reference key="3">
    <citation type="journal article" date="2014" name="Mol. Microbiol.">
        <title>Structure of the Mycobacterium tuberculosis type VII secretion system chaperone EspG5 in complex with PE25-PPE41 dimer.</title>
        <authorList>
            <person name="Korotkova N."/>
            <person name="Freire D."/>
            <person name="Phan T.H."/>
            <person name="Ummels R."/>
            <person name="Creekmore C.C."/>
            <person name="Evans T.J."/>
            <person name="Wilmanns M."/>
            <person name="Bitter W."/>
            <person name="Parret A.H."/>
            <person name="Houben E.N."/>
            <person name="Korotkov K.V."/>
        </authorList>
    </citation>
    <scope>SUBUNIT</scope>
</reference>
<feature type="chain" id="PRO_0000435128" description="ESX-1 secretion-associated protein EspG1">
    <location>
        <begin position="1"/>
        <end position="279"/>
    </location>
</feature>
<comment type="function">
    <text evidence="2 3">Specific chaperone for cognate PE/PPE proteins (PubMed:22843727). Plays an important role in preventing aggregation of PE/PPE dimers (By similarity).</text>
</comment>
<comment type="subunit">
    <text evidence="3 4">Interacts specifically with ESX-1-dependent PE/PPE proteins.</text>
</comment>
<comment type="subcellular location">
    <subcellularLocation>
        <location evidence="1">Cytoplasm</location>
    </subcellularLocation>
</comment>
<comment type="similarity">
    <text evidence="6">Belongs to the EspG family.</text>
</comment>
<organism>
    <name type="scientific">Mycobacterium marinum (strain ATCC BAA-535 / M)</name>
    <dbReference type="NCBI Taxonomy" id="216594"/>
    <lineage>
        <taxon>Bacteria</taxon>
        <taxon>Bacillati</taxon>
        <taxon>Actinomycetota</taxon>
        <taxon>Actinomycetes</taxon>
        <taxon>Mycobacteriales</taxon>
        <taxon>Mycobacteriaceae</taxon>
        <taxon>Mycobacterium</taxon>
        <taxon>Mycobacterium ulcerans group</taxon>
    </lineage>
</organism>
<protein>
    <recommendedName>
        <fullName evidence="6">ESX-1 secretion-associated protein EspG1</fullName>
    </recommendedName>
</protein>
<proteinExistence type="evidence at protein level"/>
<accession>B2HMS9</accession>